<gene>
    <name evidence="1" type="primary">glyQ</name>
    <name type="ordered locus">SDY_4344</name>
</gene>
<reference key="1">
    <citation type="journal article" date="2005" name="Nucleic Acids Res.">
        <title>Genome dynamics and diversity of Shigella species, the etiologic agents of bacillary dysentery.</title>
        <authorList>
            <person name="Yang F."/>
            <person name="Yang J."/>
            <person name="Zhang X."/>
            <person name="Chen L."/>
            <person name="Jiang Y."/>
            <person name="Yan Y."/>
            <person name="Tang X."/>
            <person name="Wang J."/>
            <person name="Xiong Z."/>
            <person name="Dong J."/>
            <person name="Xue Y."/>
            <person name="Zhu Y."/>
            <person name="Xu X."/>
            <person name="Sun L."/>
            <person name="Chen S."/>
            <person name="Nie H."/>
            <person name="Peng J."/>
            <person name="Xu J."/>
            <person name="Wang Y."/>
            <person name="Yuan Z."/>
            <person name="Wen Y."/>
            <person name="Yao Z."/>
            <person name="Shen Y."/>
            <person name="Qiang B."/>
            <person name="Hou Y."/>
            <person name="Yu J."/>
            <person name="Jin Q."/>
        </authorList>
    </citation>
    <scope>NUCLEOTIDE SEQUENCE [LARGE SCALE GENOMIC DNA]</scope>
    <source>
        <strain>Sd197</strain>
    </source>
</reference>
<feature type="chain" id="PRO_1000047494" description="Glycine--tRNA ligase alpha subunit">
    <location>
        <begin position="1"/>
        <end position="303"/>
    </location>
</feature>
<name>SYGA_SHIDS</name>
<comment type="catalytic activity">
    <reaction evidence="1">
        <text>tRNA(Gly) + glycine + ATP = glycyl-tRNA(Gly) + AMP + diphosphate</text>
        <dbReference type="Rhea" id="RHEA:16013"/>
        <dbReference type="Rhea" id="RHEA-COMP:9664"/>
        <dbReference type="Rhea" id="RHEA-COMP:9683"/>
        <dbReference type="ChEBI" id="CHEBI:30616"/>
        <dbReference type="ChEBI" id="CHEBI:33019"/>
        <dbReference type="ChEBI" id="CHEBI:57305"/>
        <dbReference type="ChEBI" id="CHEBI:78442"/>
        <dbReference type="ChEBI" id="CHEBI:78522"/>
        <dbReference type="ChEBI" id="CHEBI:456215"/>
        <dbReference type="EC" id="6.1.1.14"/>
    </reaction>
</comment>
<comment type="subunit">
    <text evidence="1">Tetramer of two alpha and two beta subunits.</text>
</comment>
<comment type="subcellular location">
    <subcellularLocation>
        <location evidence="1">Cytoplasm</location>
    </subcellularLocation>
</comment>
<comment type="similarity">
    <text evidence="1">Belongs to the class-II aminoacyl-tRNA synthetase family.</text>
</comment>
<evidence type="ECO:0000255" key="1">
    <source>
        <dbReference type="HAMAP-Rule" id="MF_00254"/>
    </source>
</evidence>
<dbReference type="EC" id="6.1.1.14" evidence="1"/>
<dbReference type="EMBL" id="CP000034">
    <property type="protein sequence ID" value="ABB64235.1"/>
    <property type="molecule type" value="Genomic_DNA"/>
</dbReference>
<dbReference type="RefSeq" id="WP_001168544.1">
    <property type="nucleotide sequence ID" value="NC_007606.1"/>
</dbReference>
<dbReference type="RefSeq" id="YP_405726.1">
    <property type="nucleotide sequence ID" value="NC_007606.1"/>
</dbReference>
<dbReference type="SMR" id="Q328M0"/>
<dbReference type="STRING" id="300267.SDY_4344"/>
<dbReference type="EnsemblBacteria" id="ABB64235">
    <property type="protein sequence ID" value="ABB64235"/>
    <property type="gene ID" value="SDY_4344"/>
</dbReference>
<dbReference type="GeneID" id="93778290"/>
<dbReference type="KEGG" id="sdy:SDY_4344"/>
<dbReference type="PATRIC" id="fig|300267.13.peg.5128"/>
<dbReference type="HOGENOM" id="CLU_057066_1_0_6"/>
<dbReference type="Proteomes" id="UP000002716">
    <property type="component" value="Chromosome"/>
</dbReference>
<dbReference type="GO" id="GO:0005829">
    <property type="term" value="C:cytosol"/>
    <property type="evidence" value="ECO:0007669"/>
    <property type="project" value="TreeGrafter"/>
</dbReference>
<dbReference type="GO" id="GO:0005524">
    <property type="term" value="F:ATP binding"/>
    <property type="evidence" value="ECO:0007669"/>
    <property type="project" value="UniProtKB-UniRule"/>
</dbReference>
<dbReference type="GO" id="GO:0004820">
    <property type="term" value="F:glycine-tRNA ligase activity"/>
    <property type="evidence" value="ECO:0007669"/>
    <property type="project" value="UniProtKB-UniRule"/>
</dbReference>
<dbReference type="GO" id="GO:0006426">
    <property type="term" value="P:glycyl-tRNA aminoacylation"/>
    <property type="evidence" value="ECO:0007669"/>
    <property type="project" value="UniProtKB-UniRule"/>
</dbReference>
<dbReference type="CDD" id="cd00733">
    <property type="entry name" value="GlyRS_alpha_core"/>
    <property type="match status" value="1"/>
</dbReference>
<dbReference type="FunFam" id="1.20.58.180:FF:000001">
    <property type="entry name" value="Glycine--tRNA ligase alpha subunit"/>
    <property type="match status" value="1"/>
</dbReference>
<dbReference type="FunFam" id="3.30.930.10:FF:000006">
    <property type="entry name" value="Glycine--tRNA ligase alpha subunit"/>
    <property type="match status" value="1"/>
</dbReference>
<dbReference type="Gene3D" id="3.30.930.10">
    <property type="entry name" value="Bira Bifunctional Protein, Domain 2"/>
    <property type="match status" value="1"/>
</dbReference>
<dbReference type="Gene3D" id="1.20.58.180">
    <property type="entry name" value="Class II aaRS and biotin synthetases, domain 2"/>
    <property type="match status" value="1"/>
</dbReference>
<dbReference type="HAMAP" id="MF_00254">
    <property type="entry name" value="Gly_tRNA_synth_alpha"/>
    <property type="match status" value="1"/>
</dbReference>
<dbReference type="InterPro" id="IPR045864">
    <property type="entry name" value="aa-tRNA-synth_II/BPL/LPL"/>
</dbReference>
<dbReference type="InterPro" id="IPR006194">
    <property type="entry name" value="Gly-tRNA-synth_heterodimer"/>
</dbReference>
<dbReference type="InterPro" id="IPR002310">
    <property type="entry name" value="Gly-tRNA_ligase_asu"/>
</dbReference>
<dbReference type="NCBIfam" id="TIGR00388">
    <property type="entry name" value="glyQ"/>
    <property type="match status" value="1"/>
</dbReference>
<dbReference type="NCBIfam" id="NF006827">
    <property type="entry name" value="PRK09348.1"/>
    <property type="match status" value="1"/>
</dbReference>
<dbReference type="PANTHER" id="PTHR30075:SF2">
    <property type="entry name" value="GLYCINE--TRNA LIGASE, CHLOROPLASTIC_MITOCHONDRIAL 2"/>
    <property type="match status" value="1"/>
</dbReference>
<dbReference type="PANTHER" id="PTHR30075">
    <property type="entry name" value="GLYCYL-TRNA SYNTHETASE"/>
    <property type="match status" value="1"/>
</dbReference>
<dbReference type="Pfam" id="PF02091">
    <property type="entry name" value="tRNA-synt_2e"/>
    <property type="match status" value="1"/>
</dbReference>
<dbReference type="PRINTS" id="PR01044">
    <property type="entry name" value="TRNASYNTHGA"/>
</dbReference>
<dbReference type="SUPFAM" id="SSF55681">
    <property type="entry name" value="Class II aaRS and biotin synthetases"/>
    <property type="match status" value="1"/>
</dbReference>
<dbReference type="PROSITE" id="PS50861">
    <property type="entry name" value="AA_TRNA_LIGASE_II_GLYAB"/>
    <property type="match status" value="1"/>
</dbReference>
<accession>Q328M0</accession>
<proteinExistence type="inferred from homology"/>
<organism>
    <name type="scientific">Shigella dysenteriae serotype 1 (strain Sd197)</name>
    <dbReference type="NCBI Taxonomy" id="300267"/>
    <lineage>
        <taxon>Bacteria</taxon>
        <taxon>Pseudomonadati</taxon>
        <taxon>Pseudomonadota</taxon>
        <taxon>Gammaproteobacteria</taxon>
        <taxon>Enterobacterales</taxon>
        <taxon>Enterobacteriaceae</taxon>
        <taxon>Shigella</taxon>
    </lineage>
</organism>
<sequence length="303" mass="34716">MQKFDTRTFQGLILTLQDYWARQGCTIVQPLDMEVGAGTSHPMTCLRALGPEPMAAAYVQPSRRPTDGRYGENPNRLQHYYQFQVVIKPSPDNIQELYLGSLKELGMDPTIHDIRFVEDNWENPTLGAWGLGWEVWLNGMEVTQFTYFQQVGGLECKPVTGEITYGLERLAMYIQGVDSVYDLVWSDGPLGKTTYGDVFHQNEVEQSTYNFEYADVDFLFTCFEQYEKEAQQLLALENPLPLPAYERILKAAHSFNLLDARKAISVTERQRYILRIRTLTKAVAEAYYASREALGFPMCNKDK</sequence>
<protein>
    <recommendedName>
        <fullName evidence="1">Glycine--tRNA ligase alpha subunit</fullName>
        <ecNumber evidence="1">6.1.1.14</ecNumber>
    </recommendedName>
    <alternativeName>
        <fullName evidence="1">Glycyl-tRNA synthetase alpha subunit</fullName>
        <shortName evidence="1">GlyRS</shortName>
    </alternativeName>
</protein>
<keyword id="KW-0030">Aminoacyl-tRNA synthetase</keyword>
<keyword id="KW-0067">ATP-binding</keyword>
<keyword id="KW-0963">Cytoplasm</keyword>
<keyword id="KW-0436">Ligase</keyword>
<keyword id="KW-0547">Nucleotide-binding</keyword>
<keyword id="KW-0648">Protein biosynthesis</keyword>
<keyword id="KW-1185">Reference proteome</keyword>